<accession>A2XS65</accession>
<accession>Q0JDZ3</accession>
<accession>Q7XKS0</accession>
<evidence type="ECO:0000250" key="1"/>
<evidence type="ECO:0000255" key="2"/>
<evidence type="ECO:0000305" key="3"/>
<feature type="signal peptide" evidence="2">
    <location>
        <begin position="1"/>
        <end position="22"/>
    </location>
</feature>
<feature type="chain" id="PRO_0000295011" description="Cysteine proteinase inhibitor 10">
    <location>
        <begin position="23"/>
        <end position="151"/>
    </location>
</feature>
<feature type="domain" description="Cystatin">
    <location>
        <begin position="40"/>
        <end position="109"/>
    </location>
</feature>
<feature type="short sequence motif" description="Secondary area of contact" evidence="1">
    <location>
        <begin position="96"/>
        <end position="100"/>
    </location>
</feature>
<feature type="site" description="Reactive site" evidence="1">
    <location>
        <position position="40"/>
    </location>
</feature>
<proteinExistence type="inferred from homology"/>
<protein>
    <recommendedName>
        <fullName>Cysteine proteinase inhibitor 10</fullName>
    </recommendedName>
    <alternativeName>
        <fullName>Oryzacystatin X</fullName>
        <shortName>OC-X</shortName>
    </alternativeName>
    <alternativeName>
        <fullName>Oryzacystatin-10</fullName>
    </alternativeName>
</protein>
<sequence length="151" mass="15448">MATSPMLFLVSLLLVLVAAATGDEASPSNAAAPAAPVLVGGRTEIRDVGSNKAVQSLGRFAVAEHNRRLRHGGSGGPADPVPVKLAFARVVEAQKQVVSGVAYYLKVAASARDPRGGAAAGGDRVFDAVVVVKAWLKSKELVSFTPASSTK</sequence>
<dbReference type="EMBL" id="CR855121">
    <property type="protein sequence ID" value="CAH66615.1"/>
    <property type="molecule type" value="Genomic_DNA"/>
</dbReference>
<dbReference type="EMBL" id="CM000129">
    <property type="protein sequence ID" value="EAY93675.1"/>
    <property type="status" value="ALT_SEQ"/>
    <property type="molecule type" value="Genomic_DNA"/>
</dbReference>
<dbReference type="SMR" id="A2XS65"/>
<dbReference type="STRING" id="39946.A2XS65"/>
<dbReference type="MEROPS" id="I25.057"/>
<dbReference type="HOGENOM" id="CLU_113093_0_1_1"/>
<dbReference type="Proteomes" id="UP000007015">
    <property type="component" value="Chromosome 4"/>
</dbReference>
<dbReference type="GO" id="GO:0005576">
    <property type="term" value="C:extracellular region"/>
    <property type="evidence" value="ECO:0007669"/>
    <property type="project" value="UniProtKB-SubCell"/>
</dbReference>
<dbReference type="GO" id="GO:0004869">
    <property type="term" value="F:cysteine-type endopeptidase inhibitor activity"/>
    <property type="evidence" value="ECO:0007669"/>
    <property type="project" value="UniProtKB-KW"/>
</dbReference>
<dbReference type="GO" id="GO:0006952">
    <property type="term" value="P:defense response"/>
    <property type="evidence" value="ECO:0007669"/>
    <property type="project" value="UniProtKB-KW"/>
</dbReference>
<dbReference type="CDD" id="cd00042">
    <property type="entry name" value="CY"/>
    <property type="match status" value="1"/>
</dbReference>
<dbReference type="Gene3D" id="3.10.450.10">
    <property type="match status" value="1"/>
</dbReference>
<dbReference type="InterPro" id="IPR000010">
    <property type="entry name" value="Cystatin_dom"/>
</dbReference>
<dbReference type="InterPro" id="IPR046350">
    <property type="entry name" value="Cystatin_sf"/>
</dbReference>
<dbReference type="PANTHER" id="PTHR47373:SF2">
    <property type="entry name" value="CYSTEINE PROTEINASE INHIBITOR 10"/>
    <property type="match status" value="1"/>
</dbReference>
<dbReference type="PANTHER" id="PTHR47373">
    <property type="entry name" value="CYSTEINE PROTEINASE INHIBITOR 2"/>
    <property type="match status" value="1"/>
</dbReference>
<dbReference type="Pfam" id="PF16845">
    <property type="entry name" value="SQAPI"/>
    <property type="match status" value="1"/>
</dbReference>
<dbReference type="SMART" id="SM00043">
    <property type="entry name" value="CY"/>
    <property type="match status" value="1"/>
</dbReference>
<dbReference type="SUPFAM" id="SSF54403">
    <property type="entry name" value="Cystatin/monellin"/>
    <property type="match status" value="1"/>
</dbReference>
<comment type="function">
    <text evidence="1">Specific inhibitor of cysteine proteinases. Probably involved in the regulation of endogenous processes and in defense against pests and pathogens (By similarity).</text>
</comment>
<comment type="subcellular location">
    <subcellularLocation>
        <location evidence="3">Secreted</location>
    </subcellularLocation>
</comment>
<comment type="similarity">
    <text evidence="3">Belongs to the cystatin family. Phytocystatin subfamily.</text>
</comment>
<comment type="sequence caution" evidence="3">
    <conflict type="frameshift">
        <sequence resource="EMBL-CDS" id="EAY93675"/>
    </conflict>
</comment>
<comment type="sequence caution" evidence="3">
    <conflict type="miscellaneous discrepancy">
        <sequence resource="EMBL-CDS" id="EAY93675"/>
    </conflict>
    <text>Sequencing errors.</text>
</comment>
<gene>
    <name type="ORF">OsI_014908</name>
    <name type="ORF">OSIGBa0144C23.1</name>
</gene>
<keyword id="KW-0611">Plant defense</keyword>
<keyword id="KW-0646">Protease inhibitor</keyword>
<keyword id="KW-1185">Reference proteome</keyword>
<keyword id="KW-0964">Secreted</keyword>
<keyword id="KW-0732">Signal</keyword>
<keyword id="KW-0789">Thiol protease inhibitor</keyword>
<name>CYT10_ORYSI</name>
<reference key="1">
    <citation type="journal article" date="2002" name="Nature">
        <title>Sequence and analysis of rice chromosome 4.</title>
        <authorList>
            <person name="Feng Q."/>
            <person name="Zhang Y."/>
            <person name="Hao P."/>
            <person name="Wang S."/>
            <person name="Fu G."/>
            <person name="Huang Y."/>
            <person name="Li Y."/>
            <person name="Zhu J."/>
            <person name="Liu Y."/>
            <person name="Hu X."/>
            <person name="Jia P."/>
            <person name="Zhang Y."/>
            <person name="Zhao Q."/>
            <person name="Ying K."/>
            <person name="Yu S."/>
            <person name="Tang Y."/>
            <person name="Weng Q."/>
            <person name="Zhang L."/>
            <person name="Lu Y."/>
            <person name="Mu J."/>
            <person name="Lu Y."/>
            <person name="Zhang L.S."/>
            <person name="Yu Z."/>
            <person name="Fan D."/>
            <person name="Liu X."/>
            <person name="Lu T."/>
            <person name="Li C."/>
            <person name="Wu Y."/>
            <person name="Sun T."/>
            <person name="Lei H."/>
            <person name="Li T."/>
            <person name="Hu H."/>
            <person name="Guan J."/>
            <person name="Wu M."/>
            <person name="Zhang R."/>
            <person name="Zhou B."/>
            <person name="Chen Z."/>
            <person name="Chen L."/>
            <person name="Jin Z."/>
            <person name="Wang R."/>
            <person name="Yin H."/>
            <person name="Cai Z."/>
            <person name="Ren S."/>
            <person name="Lv G."/>
            <person name="Gu W."/>
            <person name="Zhu G."/>
            <person name="Tu Y."/>
            <person name="Jia J."/>
            <person name="Zhang Y."/>
            <person name="Chen J."/>
            <person name="Kang H."/>
            <person name="Chen X."/>
            <person name="Shao C."/>
            <person name="Sun Y."/>
            <person name="Hu Q."/>
            <person name="Zhang X."/>
            <person name="Zhang W."/>
            <person name="Wang L."/>
            <person name="Ding C."/>
            <person name="Sheng H."/>
            <person name="Gu J."/>
            <person name="Chen S."/>
            <person name="Ni L."/>
            <person name="Zhu F."/>
            <person name="Chen W."/>
            <person name="Lan L."/>
            <person name="Lai Y."/>
            <person name="Cheng Z."/>
            <person name="Gu M."/>
            <person name="Jiang J."/>
            <person name="Li J."/>
            <person name="Hong G."/>
            <person name="Xue Y."/>
            <person name="Han B."/>
        </authorList>
    </citation>
    <scope>NUCLEOTIDE SEQUENCE [LARGE SCALE GENOMIC DNA]</scope>
    <source>
        <strain>cv. Guang-Lu-Ai No.4</strain>
    </source>
</reference>
<reference key="2">
    <citation type="journal article" date="2005" name="PLoS Biol.">
        <title>The genomes of Oryza sativa: a history of duplications.</title>
        <authorList>
            <person name="Yu J."/>
            <person name="Wang J."/>
            <person name="Lin W."/>
            <person name="Li S."/>
            <person name="Li H."/>
            <person name="Zhou J."/>
            <person name="Ni P."/>
            <person name="Dong W."/>
            <person name="Hu S."/>
            <person name="Zeng C."/>
            <person name="Zhang J."/>
            <person name="Zhang Y."/>
            <person name="Li R."/>
            <person name="Xu Z."/>
            <person name="Li S."/>
            <person name="Li X."/>
            <person name="Zheng H."/>
            <person name="Cong L."/>
            <person name="Lin L."/>
            <person name="Yin J."/>
            <person name="Geng J."/>
            <person name="Li G."/>
            <person name="Shi J."/>
            <person name="Liu J."/>
            <person name="Lv H."/>
            <person name="Li J."/>
            <person name="Wang J."/>
            <person name="Deng Y."/>
            <person name="Ran L."/>
            <person name="Shi X."/>
            <person name="Wang X."/>
            <person name="Wu Q."/>
            <person name="Li C."/>
            <person name="Ren X."/>
            <person name="Wang J."/>
            <person name="Wang X."/>
            <person name="Li D."/>
            <person name="Liu D."/>
            <person name="Zhang X."/>
            <person name="Ji Z."/>
            <person name="Zhao W."/>
            <person name="Sun Y."/>
            <person name="Zhang Z."/>
            <person name="Bao J."/>
            <person name="Han Y."/>
            <person name="Dong L."/>
            <person name="Ji J."/>
            <person name="Chen P."/>
            <person name="Wu S."/>
            <person name="Liu J."/>
            <person name="Xiao Y."/>
            <person name="Bu D."/>
            <person name="Tan J."/>
            <person name="Yang L."/>
            <person name="Ye C."/>
            <person name="Zhang J."/>
            <person name="Xu J."/>
            <person name="Zhou Y."/>
            <person name="Yu Y."/>
            <person name="Zhang B."/>
            <person name="Zhuang S."/>
            <person name="Wei H."/>
            <person name="Liu B."/>
            <person name="Lei M."/>
            <person name="Yu H."/>
            <person name="Li Y."/>
            <person name="Xu H."/>
            <person name="Wei S."/>
            <person name="He X."/>
            <person name="Fang L."/>
            <person name="Zhang Z."/>
            <person name="Zhang Y."/>
            <person name="Huang X."/>
            <person name="Su Z."/>
            <person name="Tong W."/>
            <person name="Li J."/>
            <person name="Tong Z."/>
            <person name="Li S."/>
            <person name="Ye J."/>
            <person name="Wang L."/>
            <person name="Fang L."/>
            <person name="Lei T."/>
            <person name="Chen C.-S."/>
            <person name="Chen H.-C."/>
            <person name="Xu Z."/>
            <person name="Li H."/>
            <person name="Huang H."/>
            <person name="Zhang F."/>
            <person name="Xu H."/>
            <person name="Li N."/>
            <person name="Zhao C."/>
            <person name="Li S."/>
            <person name="Dong L."/>
            <person name="Huang Y."/>
            <person name="Li L."/>
            <person name="Xi Y."/>
            <person name="Qi Q."/>
            <person name="Li W."/>
            <person name="Zhang B."/>
            <person name="Hu W."/>
            <person name="Zhang Y."/>
            <person name="Tian X."/>
            <person name="Jiao Y."/>
            <person name="Liang X."/>
            <person name="Jin J."/>
            <person name="Gao L."/>
            <person name="Zheng W."/>
            <person name="Hao B."/>
            <person name="Liu S.-M."/>
            <person name="Wang W."/>
            <person name="Yuan L."/>
            <person name="Cao M."/>
            <person name="McDermott J."/>
            <person name="Samudrala R."/>
            <person name="Wang J."/>
            <person name="Wong G.K.-S."/>
            <person name="Yang H."/>
        </authorList>
    </citation>
    <scope>NUCLEOTIDE SEQUENCE [LARGE SCALE GENOMIC DNA]</scope>
    <source>
        <strain>cv. 93-11</strain>
    </source>
</reference>
<reference key="3">
    <citation type="journal article" date="2005" name="Mol. Genet. Genomics">
        <title>Comparative phylogenetic analysis of cystatin gene families from arabidopsis, rice and barley.</title>
        <authorList>
            <person name="Martinez M."/>
            <person name="Abraham Z."/>
            <person name="Carbonero P."/>
            <person name="Diaz I."/>
        </authorList>
    </citation>
    <scope>GENE FAMILY</scope>
</reference>
<organism>
    <name type="scientific">Oryza sativa subsp. indica</name>
    <name type="common">Rice</name>
    <dbReference type="NCBI Taxonomy" id="39946"/>
    <lineage>
        <taxon>Eukaryota</taxon>
        <taxon>Viridiplantae</taxon>
        <taxon>Streptophyta</taxon>
        <taxon>Embryophyta</taxon>
        <taxon>Tracheophyta</taxon>
        <taxon>Spermatophyta</taxon>
        <taxon>Magnoliopsida</taxon>
        <taxon>Liliopsida</taxon>
        <taxon>Poales</taxon>
        <taxon>Poaceae</taxon>
        <taxon>BOP clade</taxon>
        <taxon>Oryzoideae</taxon>
        <taxon>Oryzeae</taxon>
        <taxon>Oryzinae</taxon>
        <taxon>Oryza</taxon>
        <taxon>Oryza sativa</taxon>
    </lineage>
</organism>